<gene>
    <name type="primary">rng</name>
    <name type="synonym">cafA</name>
    <name type="ordered locus">c4001</name>
</gene>
<organism>
    <name type="scientific">Escherichia coli O6:H1 (strain CFT073 / ATCC 700928 / UPEC)</name>
    <dbReference type="NCBI Taxonomy" id="199310"/>
    <lineage>
        <taxon>Bacteria</taxon>
        <taxon>Pseudomonadati</taxon>
        <taxon>Pseudomonadota</taxon>
        <taxon>Gammaproteobacteria</taxon>
        <taxon>Enterobacterales</taxon>
        <taxon>Enterobacteriaceae</taxon>
        <taxon>Escherichia</taxon>
    </lineage>
</organism>
<feature type="initiator methionine" description="Removed" evidence="1">
    <location>
        <position position="1"/>
    </location>
</feature>
<feature type="chain" id="PRO_0000097382" description="Ribonuclease G">
    <location>
        <begin position="2"/>
        <end position="489"/>
    </location>
</feature>
<feature type="domain" description="S1 motif" evidence="3">
    <location>
        <begin position="39"/>
        <end position="128"/>
    </location>
</feature>
<feature type="binding site" evidence="2">
    <location>
        <position position="304"/>
    </location>
    <ligand>
        <name>Mg(2+)</name>
        <dbReference type="ChEBI" id="CHEBI:18420"/>
        <note>catalytic</note>
    </ligand>
</feature>
<feature type="binding site" evidence="2">
    <location>
        <position position="347"/>
    </location>
    <ligand>
        <name>Mg(2+)</name>
        <dbReference type="ChEBI" id="CHEBI:18420"/>
        <note>catalytic</note>
    </ligand>
</feature>
<name>RNG_ECOL6</name>
<comment type="function">
    <text evidence="1">An endonuclease that acts in the processing of the 5'-end of 16S rRNA and 23S rRNA. It prefers 5'-monophosphorylated substrates and cleaves single-stranded sites rich in A and U residues; contributes to tRNA processing and mRNA turnover.</text>
</comment>
<comment type="cofactor">
    <cofactor evidence="2">
        <name>Mg(2+)</name>
        <dbReference type="ChEBI" id="CHEBI:18420"/>
    </cofactor>
    <text evidence="2">Binds 1 Mg(2+) ion per subunit.</text>
</comment>
<comment type="subunit">
    <text evidence="1">Homodimer, in equilibrium with possible higher multimers.</text>
</comment>
<comment type="subcellular location">
    <subcellularLocation>
        <location evidence="1">Cytoplasm</location>
    </subcellularLocation>
</comment>
<comment type="similarity">
    <text evidence="4">Belongs to the RNase E/G family. RNase G subfamily.</text>
</comment>
<comment type="sequence caution" evidence="4">
    <conflict type="erroneous initiation">
        <sequence resource="EMBL-CDS" id="AAN82441"/>
    </conflict>
    <text>Truncated N-terminus.</text>
</comment>
<sequence length="489" mass="55364">MTAELLVNVTPSETRVAYIDGGILQEIHIEREARRGIVGNIYKGRVSRVLPGMQAAFVDIGLDKAAFLHASDIMPHTECVAGEEQKQFTVRDISELVRQGQDLMVQVVKDPLGTKGARLTTDITLPSRYLVFMPGASHVGVSQRIESESERERLKKVVAEYCDEQGGFIIRTAAEGVGEAELASDAAYLKRVWTKVMERKKRPQTRYQLYGELALAQRVLRDFADAELDRIRVDSRLTYEALLEFTSEYIPEMTSKLEHYTGRQPIFDLFDVENEIQRALERKVELKSGGYLIIDQTEAMTTVDINTGAFVGHRNLDDTIFNTNIEATQAIARQLRLRNLGGIIIIDFIDMNNEDHRRRVLHSLEQALSKDRVKTSVNGFSALGLVEMTRKRTRESIEHVLCNECPTCHGRGTVKTVETVCYEIMREIVRVHHAYDSDRFLVYASPAVAEALKGEESHSLAEVEIFVGKQVKVQIEPLYNQEQFDVVMM</sequence>
<keyword id="KW-0963">Cytoplasm</keyword>
<keyword id="KW-0255">Endonuclease</keyword>
<keyword id="KW-0378">Hydrolase</keyword>
<keyword id="KW-0460">Magnesium</keyword>
<keyword id="KW-0479">Metal-binding</keyword>
<keyword id="KW-0540">Nuclease</keyword>
<keyword id="KW-1185">Reference proteome</keyword>
<keyword id="KW-0694">RNA-binding</keyword>
<keyword id="KW-0698">rRNA processing</keyword>
<keyword id="KW-0699">rRNA-binding</keyword>
<keyword id="KW-0819">tRNA processing</keyword>
<keyword id="KW-0820">tRNA-binding</keyword>
<evidence type="ECO:0000250" key="1">
    <source>
        <dbReference type="UniProtKB" id="P0A9J0"/>
    </source>
</evidence>
<evidence type="ECO:0000250" key="2">
    <source>
        <dbReference type="UniProtKB" id="P21513"/>
    </source>
</evidence>
<evidence type="ECO:0000255" key="3">
    <source>
        <dbReference type="PROSITE-ProRule" id="PRU00180"/>
    </source>
</evidence>
<evidence type="ECO:0000305" key="4"/>
<reference key="1">
    <citation type="journal article" date="2002" name="Proc. Natl. Acad. Sci. U.S.A.">
        <title>Extensive mosaic structure revealed by the complete genome sequence of uropathogenic Escherichia coli.</title>
        <authorList>
            <person name="Welch R.A."/>
            <person name="Burland V."/>
            <person name="Plunkett G. III"/>
            <person name="Redford P."/>
            <person name="Roesch P."/>
            <person name="Rasko D."/>
            <person name="Buckles E.L."/>
            <person name="Liou S.-R."/>
            <person name="Boutin A."/>
            <person name="Hackett J."/>
            <person name="Stroud D."/>
            <person name="Mayhew G.F."/>
            <person name="Rose D.J."/>
            <person name="Zhou S."/>
            <person name="Schwartz D.C."/>
            <person name="Perna N.T."/>
            <person name="Mobley H.L.T."/>
            <person name="Donnenberg M.S."/>
            <person name="Blattner F.R."/>
        </authorList>
    </citation>
    <scope>NUCLEOTIDE SEQUENCE [LARGE SCALE GENOMIC DNA]</scope>
    <source>
        <strain>CFT073 / ATCC 700928 / UPEC</strain>
    </source>
</reference>
<proteinExistence type="inferred from homology"/>
<dbReference type="EC" id="3.1.26.-"/>
<dbReference type="EMBL" id="AE014075">
    <property type="protein sequence ID" value="AAN82441.1"/>
    <property type="status" value="ALT_INIT"/>
    <property type="molecule type" value="Genomic_DNA"/>
</dbReference>
<dbReference type="RefSeq" id="WP_000123197.1">
    <property type="nucleotide sequence ID" value="NZ_CP051263.1"/>
</dbReference>
<dbReference type="SMR" id="P0A9J1"/>
<dbReference type="STRING" id="199310.c4001"/>
<dbReference type="GeneID" id="93778739"/>
<dbReference type="KEGG" id="ecc:c4001"/>
<dbReference type="eggNOG" id="COG1530">
    <property type="taxonomic scope" value="Bacteria"/>
</dbReference>
<dbReference type="HOGENOM" id="CLU_003468_5_3_6"/>
<dbReference type="Proteomes" id="UP000001410">
    <property type="component" value="Chromosome"/>
</dbReference>
<dbReference type="GO" id="GO:0005737">
    <property type="term" value="C:cytoplasm"/>
    <property type="evidence" value="ECO:0007669"/>
    <property type="project" value="UniProtKB-SubCell"/>
</dbReference>
<dbReference type="GO" id="GO:0004519">
    <property type="term" value="F:endonuclease activity"/>
    <property type="evidence" value="ECO:0007669"/>
    <property type="project" value="UniProtKB-KW"/>
</dbReference>
<dbReference type="GO" id="GO:0046872">
    <property type="term" value="F:metal ion binding"/>
    <property type="evidence" value="ECO:0007669"/>
    <property type="project" value="UniProtKB-KW"/>
</dbReference>
<dbReference type="GO" id="GO:0004540">
    <property type="term" value="F:RNA nuclease activity"/>
    <property type="evidence" value="ECO:0007669"/>
    <property type="project" value="InterPro"/>
</dbReference>
<dbReference type="GO" id="GO:0019843">
    <property type="term" value="F:rRNA binding"/>
    <property type="evidence" value="ECO:0007669"/>
    <property type="project" value="UniProtKB-KW"/>
</dbReference>
<dbReference type="GO" id="GO:0000049">
    <property type="term" value="F:tRNA binding"/>
    <property type="evidence" value="ECO:0007669"/>
    <property type="project" value="UniProtKB-KW"/>
</dbReference>
<dbReference type="GO" id="GO:0006364">
    <property type="term" value="P:rRNA processing"/>
    <property type="evidence" value="ECO:0007669"/>
    <property type="project" value="UniProtKB-KW"/>
</dbReference>
<dbReference type="GO" id="GO:0008033">
    <property type="term" value="P:tRNA processing"/>
    <property type="evidence" value="ECO:0007669"/>
    <property type="project" value="UniProtKB-KW"/>
</dbReference>
<dbReference type="CDD" id="cd04453">
    <property type="entry name" value="S1_RNase_E"/>
    <property type="match status" value="1"/>
</dbReference>
<dbReference type="FunFam" id="2.40.50.140:FF:000028">
    <property type="entry name" value="Ribonuclease G"/>
    <property type="match status" value="1"/>
</dbReference>
<dbReference type="FunFam" id="3.40.1260.20:FF:000001">
    <property type="entry name" value="Ribonuclease G Rng"/>
    <property type="match status" value="1"/>
</dbReference>
<dbReference type="Gene3D" id="2.40.50.140">
    <property type="entry name" value="Nucleic acid-binding proteins"/>
    <property type="match status" value="1"/>
</dbReference>
<dbReference type="Gene3D" id="3.40.1260.20">
    <property type="entry name" value="Ribonuclease E, catalytic domain"/>
    <property type="match status" value="1"/>
</dbReference>
<dbReference type="InterPro" id="IPR012340">
    <property type="entry name" value="NA-bd_OB-fold"/>
</dbReference>
<dbReference type="InterPro" id="IPR019307">
    <property type="entry name" value="RNA-bd_AU-1/RNase_E/G"/>
</dbReference>
<dbReference type="InterPro" id="IPR004659">
    <property type="entry name" value="RNase_E/G"/>
</dbReference>
<dbReference type="InterPro" id="IPR048583">
    <property type="entry name" value="RNase_E_G_thioredoxin-like"/>
</dbReference>
<dbReference type="InterPro" id="IPR003029">
    <property type="entry name" value="S1_domain"/>
</dbReference>
<dbReference type="NCBIfam" id="NF008689">
    <property type="entry name" value="PRK11712.1"/>
    <property type="match status" value="1"/>
</dbReference>
<dbReference type="NCBIfam" id="TIGR00757">
    <property type="entry name" value="RNaseEG"/>
    <property type="match status" value="1"/>
</dbReference>
<dbReference type="PANTHER" id="PTHR30001">
    <property type="entry name" value="RIBONUCLEASE"/>
    <property type="match status" value="1"/>
</dbReference>
<dbReference type="PANTHER" id="PTHR30001:SF0">
    <property type="entry name" value="RIBONUCLEASE G"/>
    <property type="match status" value="1"/>
</dbReference>
<dbReference type="Pfam" id="PF10150">
    <property type="entry name" value="RNase_E_G"/>
    <property type="match status" value="1"/>
</dbReference>
<dbReference type="Pfam" id="PF20833">
    <property type="entry name" value="RNase_E_G_Thio"/>
    <property type="match status" value="1"/>
</dbReference>
<dbReference type="Pfam" id="PF00575">
    <property type="entry name" value="S1"/>
    <property type="match status" value="1"/>
</dbReference>
<dbReference type="SMART" id="SM00316">
    <property type="entry name" value="S1"/>
    <property type="match status" value="1"/>
</dbReference>
<dbReference type="SUPFAM" id="SSF50249">
    <property type="entry name" value="Nucleic acid-binding proteins"/>
    <property type="match status" value="1"/>
</dbReference>
<dbReference type="PROSITE" id="PS50126">
    <property type="entry name" value="S1"/>
    <property type="match status" value="1"/>
</dbReference>
<accession>P0A9J1</accession>
<accession>P25537</accession>
<accession>P76677</accession>
<protein>
    <recommendedName>
        <fullName>Ribonuclease G</fullName>
        <shortName>RNase G</shortName>
        <ecNumber>3.1.26.-</ecNumber>
    </recommendedName>
</protein>